<accession>P0DTR5</accession>
<evidence type="ECO:0000255" key="1"/>
<evidence type="ECO:0000269" key="2">
    <source>
    </source>
</evidence>
<evidence type="ECO:0000303" key="3">
    <source>
    </source>
</evidence>
<evidence type="ECO:0000305" key="4"/>
<evidence type="ECO:0000305" key="5">
    <source>
    </source>
</evidence>
<evidence type="ECO:0007829" key="6">
    <source>
        <dbReference type="PDB" id="8X1B"/>
    </source>
</evidence>
<sequence length="1078" mass="118707">MRGKKFISLTLSTMLCLQLLPTASFAAAPATDTGNAGLIAEGDYAIAGNGVRVTYDADGQTITLYRTEGSGLIQMSKPSPLGGPVIGGQEVQDFSHISCDVEQSTSGVMGSGQRMTITSQSMSTGLIRTYVLETSDIEEGVVYTATSYEAGASDVEVSWFIGSVYELYGAEDRIWSYNGGGEGPMHYYDTLQKIDLTDSGKFSRENKQDDTAASIPVSDIYIADGGITVGDASATRREVHTPVQETSDSAQVSIGWPGKVIAAGSVIEIGESFAVVHPGDYYNGLRGYKNAMDHLGVIMPAPGDIPDSSYDLRWESWGWGFNWTIDLIIGKLDELQAAGVKQITLDDGWYTNAGDWALNPEKFPNGASDALRLTDAIHEHGMTALLWWRPCDGGIDSILYQQHPEYFVMDADGRPARLPTPGGGTNPSLGYALCPMADGAIASQVDFVNRAMNDWGFDGFKGDYVWSMPECYNPAHNHASPEESTEKQSEIYRVSYEAMVANDPNVFNLLCNCGTPQDYYSLPYMTQIATADPTSVDQTRRRVKAYKALMGDYFPVTADHNNIWYPSAVGTGSVLIEKRDLSGTAKEEYEKWLGIADTVQLQKGRFIGDLYSYGFDPYETYVVEKDGVMYYAFYKDGSKYSPTGYPDIELKGLDPNKMYRIVDYVNDRVVATNLMGDNAVFNTRFSDYLLVKAVEISEPDPEPVDPDYGFTSVDDRDEALIYTGTWHDDNNASFSEGTARYTNSTDASVVFSFTGTSIRWYGQRDTNFGTAEVYLDDELKTTVDANGAAEAGVCLFEALDLPAAEHTIKIVCKSGVIDIDRFAYEAATLEPIYEKVDALSDRITYVGNWEEYHNSEFYMGNAMRTDEAGAYAELTFRGTAVRLYAEMSFNFGTADVYLDGELVENIILYGQEATGQLMFERTGLEEGEHTIRLVQNAWNINLDYISYLPEQDQPTPPETTVTVDAMDAQLVYTGVWNDDYHDVFQEGTARYASSAGASVEFEFTGSEIRWYGQNDSNFGVASVYIDNEFVQQVNVNGAAAVGKLLFQKADLPAGSHTIRIVCDTPVIDLDYLTYTTNA</sequence>
<protein>
    <recommendedName>
        <fullName evidence="3">A type blood alpha-D-galactosamine galactosaminidase</fullName>
        <ecNumber evidence="2">3.2.1.-</ecNumber>
    </recommendedName>
    <alternativeName>
        <fullName evidence="3">FpGalactosaminidase</fullName>
        <shortName evidence="3">FpGalNase</shortName>
    </alternativeName>
    <alternativeName>
        <fullName evidence="3">GH36</fullName>
    </alternativeName>
</protein>
<keyword id="KW-0002">3D-structure</keyword>
<keyword id="KW-0326">Glycosidase</keyword>
<keyword id="KW-0378">Hydrolase</keyword>
<keyword id="KW-0732">Signal</keyword>
<feature type="signal peptide" evidence="1">
    <location>
        <begin position="1"/>
        <end position="26"/>
    </location>
</feature>
<feature type="chain" id="PRO_0000448572" description="A type blood alpha-D-galactosamine galactosaminidase">
    <location>
        <begin position="27"/>
        <end position="1078"/>
    </location>
</feature>
<feature type="region of interest" description="Glycoside hydrolase 36 domain" evidence="5">
    <location>
        <begin position="306"/>
        <end position="570"/>
    </location>
</feature>
<feature type="region of interest" description="Not required for activity on soluble substrates" evidence="2">
    <location>
        <begin position="699"/>
        <end position="1078"/>
    </location>
</feature>
<feature type="active site" description="Nucleophile" evidence="5">
    <location>
        <position position="463"/>
    </location>
</feature>
<feature type="active site" evidence="5">
    <location>
        <position position="532"/>
    </location>
</feature>
<feature type="mutagenesis site" description="Loss of activity." evidence="2">
    <original>D</original>
    <variation>A</variation>
    <variation>G</variation>
    <variation>S</variation>
    <location>
        <position position="463"/>
    </location>
</feature>
<feature type="strand" evidence="6">
    <location>
        <begin position="49"/>
        <end position="56"/>
    </location>
</feature>
<feature type="turn" evidence="6">
    <location>
        <begin position="57"/>
        <end position="60"/>
    </location>
</feature>
<feature type="strand" evidence="6">
    <location>
        <begin position="61"/>
        <end position="68"/>
    </location>
</feature>
<feature type="strand" evidence="6">
    <location>
        <begin position="71"/>
        <end position="74"/>
    </location>
</feature>
<feature type="strand" evidence="6">
    <location>
        <begin position="84"/>
        <end position="86"/>
    </location>
</feature>
<feature type="strand" evidence="6">
    <location>
        <begin position="94"/>
        <end position="107"/>
    </location>
</feature>
<feature type="strand" evidence="6">
    <location>
        <begin position="110"/>
        <end position="121"/>
    </location>
</feature>
<feature type="turn" evidence="6">
    <location>
        <begin position="122"/>
        <end position="124"/>
    </location>
</feature>
<feature type="strand" evidence="6">
    <location>
        <begin position="126"/>
        <end position="153"/>
    </location>
</feature>
<feature type="strand" evidence="6">
    <location>
        <begin position="158"/>
        <end position="167"/>
    </location>
</feature>
<feature type="strand" evidence="6">
    <location>
        <begin position="172"/>
        <end position="177"/>
    </location>
</feature>
<feature type="strand" evidence="6">
    <location>
        <begin position="181"/>
        <end position="183"/>
    </location>
</feature>
<feature type="turn" evidence="6">
    <location>
        <begin position="185"/>
        <end position="187"/>
    </location>
</feature>
<feature type="strand" evidence="6">
    <location>
        <begin position="190"/>
        <end position="197"/>
    </location>
</feature>
<feature type="strand" evidence="6">
    <location>
        <begin position="203"/>
        <end position="209"/>
    </location>
</feature>
<feature type="strand" evidence="6">
    <location>
        <begin position="217"/>
        <end position="221"/>
    </location>
</feature>
<feature type="strand" evidence="6">
    <location>
        <begin position="226"/>
        <end position="231"/>
    </location>
</feature>
<feature type="strand" evidence="6">
    <location>
        <begin position="239"/>
        <end position="245"/>
    </location>
</feature>
<feature type="strand" evidence="6">
    <location>
        <begin position="247"/>
        <end position="257"/>
    </location>
</feature>
<feature type="strand" evidence="6">
    <location>
        <begin position="265"/>
        <end position="280"/>
    </location>
</feature>
<feature type="helix" evidence="6">
    <location>
        <begin position="281"/>
        <end position="292"/>
    </location>
</feature>
<feature type="helix" evidence="6">
    <location>
        <begin position="293"/>
        <end position="295"/>
    </location>
</feature>
<feature type="helix" evidence="6">
    <location>
        <begin position="302"/>
        <end position="304"/>
    </location>
</feature>
<feature type="strand" evidence="6">
    <location>
        <begin position="309"/>
        <end position="311"/>
    </location>
</feature>
<feature type="helix" evidence="6">
    <location>
        <begin position="325"/>
        <end position="330"/>
    </location>
</feature>
<feature type="helix" evidence="6">
    <location>
        <begin position="332"/>
        <end position="338"/>
    </location>
</feature>
<feature type="strand" evidence="6">
    <location>
        <begin position="342"/>
        <end position="345"/>
    </location>
</feature>
<feature type="strand" evidence="6">
    <location>
        <begin position="347"/>
        <end position="352"/>
    </location>
</feature>
<feature type="turn" evidence="6">
    <location>
        <begin position="353"/>
        <end position="355"/>
    </location>
</feature>
<feature type="turn" evidence="6">
    <location>
        <begin position="360"/>
        <end position="362"/>
    </location>
</feature>
<feature type="turn" evidence="6">
    <location>
        <begin position="364"/>
        <end position="366"/>
    </location>
</feature>
<feature type="helix" evidence="6">
    <location>
        <begin position="367"/>
        <end position="379"/>
    </location>
</feature>
<feature type="strand" evidence="6">
    <location>
        <begin position="383"/>
        <end position="388"/>
    </location>
</feature>
<feature type="strand" evidence="6">
    <location>
        <begin position="395"/>
        <end position="397"/>
    </location>
</feature>
<feature type="helix" evidence="6">
    <location>
        <begin position="398"/>
        <end position="402"/>
    </location>
</feature>
<feature type="helix" evidence="6">
    <location>
        <begin position="404"/>
        <end position="406"/>
    </location>
</feature>
<feature type="strand" evidence="6">
    <location>
        <begin position="431"/>
        <end position="433"/>
    </location>
</feature>
<feature type="helix" evidence="6">
    <location>
        <begin position="438"/>
        <end position="453"/>
    </location>
</feature>
<feature type="strand" evidence="6">
    <location>
        <begin position="458"/>
        <end position="464"/>
    </location>
</feature>
<feature type="turn" evidence="6">
    <location>
        <begin position="474"/>
        <end position="477"/>
    </location>
</feature>
<feature type="helix" evidence="6">
    <location>
        <begin position="481"/>
        <end position="484"/>
    </location>
</feature>
<feature type="helix" evidence="6">
    <location>
        <begin position="488"/>
        <end position="502"/>
    </location>
</feature>
<feature type="strand" evidence="6">
    <location>
        <begin position="507"/>
        <end position="511"/>
    </location>
</feature>
<feature type="helix" evidence="6">
    <location>
        <begin position="519"/>
        <end position="524"/>
    </location>
</feature>
<feature type="helix" evidence="6">
    <location>
        <begin position="536"/>
        <end position="550"/>
    </location>
</feature>
<feature type="strand" evidence="6">
    <location>
        <begin position="560"/>
        <end position="562"/>
    </location>
</feature>
<feature type="helix" evidence="6">
    <location>
        <begin position="565"/>
        <end position="570"/>
    </location>
</feature>
<feature type="helix" evidence="6">
    <location>
        <begin position="584"/>
        <end position="599"/>
    </location>
</feature>
<feature type="strand" evidence="6">
    <location>
        <begin position="604"/>
        <end position="607"/>
    </location>
</feature>
<feature type="strand" evidence="6">
    <location>
        <begin position="609"/>
        <end position="611"/>
    </location>
</feature>
<feature type="strand" evidence="6">
    <location>
        <begin position="615"/>
        <end position="625"/>
    </location>
</feature>
<feature type="strand" evidence="6">
    <location>
        <begin position="628"/>
        <end position="634"/>
    </location>
</feature>
<feature type="strand" evidence="6">
    <location>
        <begin position="658"/>
        <end position="663"/>
    </location>
</feature>
<feature type="turn" evidence="6">
    <location>
        <begin position="664"/>
        <end position="667"/>
    </location>
</feature>
<feature type="strand" evidence="6">
    <location>
        <begin position="668"/>
        <end position="675"/>
    </location>
</feature>
<feature type="turn" evidence="6">
    <location>
        <begin position="676"/>
        <end position="678"/>
    </location>
</feature>
<feature type="strand" evidence="6">
    <location>
        <begin position="686"/>
        <end position="698"/>
    </location>
</feature>
<comment type="function">
    <text evidence="2">One of an enzyme pair that work together to convert the A antigen to the H antigen of the O blood type, which together release galactosamine. Catalyzes the second step in the conversion, acts on the product of the first reaction (FpGalNAcDeAc, AC P0DTR4). Is specific for galactosamine containing sugars, does not cleave GalNAc residues.</text>
</comment>
<comment type="catalytic activity">
    <reaction evidence="2">
        <text>an alpha-D-galactosaminyl-(1-&gt;3)-[alpha-L-fucosyl-(1-&gt;2)]-beta-D-galactosyl derivative + H2O = D-galactosamine + an alpha-L-fucosyl-(1-&gt;2)-beta-D-galactosyl derivative</text>
        <dbReference type="Rhea" id="RHEA:61568"/>
        <dbReference type="ChEBI" id="CHEBI:15377"/>
        <dbReference type="ChEBI" id="CHEBI:140327"/>
        <dbReference type="ChEBI" id="CHEBI:144802"/>
        <dbReference type="ChEBI" id="CHEBI:144817"/>
    </reaction>
</comment>
<comment type="biophysicochemical properties">
    <kinetics>
        <KM evidence="2">64.5 uM for GalN antigen type 1 penta-MU</KM>
    </kinetics>
    <phDependence>
        <text evidence="2">Optimum pH is 6.5.</text>
    </phDependence>
</comment>
<comment type="domain">
    <text evidence="2">Has an N-terminal glycoside hydrolase 36 domain with a probable carbohydrate-binding domain in the C-terminus. The C-terminus is not required for activity on soluble substrates but increases efficiency of cleavage in red blood cells.</text>
</comment>
<comment type="biotechnology">
    <text evidence="2">5 ug/ml of this enzyme pair converts A blood type to O blood type in an hour, and can be removed by centrifugation, showing the pair can be used for production of universal type donor blood.</text>
</comment>
<comment type="miscellaneous">
    <text evidence="2">DNA was isolated from a male human fecal sample of AB+ blood type, the sequence was given to UniProtKB by the submitters.</text>
</comment>
<comment type="similarity">
    <text evidence="4">Belongs to the glycosyl hydrolase 36 family.</text>
</comment>
<comment type="online information" name="Protein Spotlight">
    <link uri="https://www.proteinspotlight.org/back_issues/220/"/>
    <text>Dropping barriers - Issue 220 of December 2019</text>
</comment>
<proteinExistence type="evidence at protein level"/>
<name>AGAL_FLAPL</name>
<reference key="1">
    <citation type="journal article" date="2019" name="Nat. Microbiol.">
        <title>An enzymatic pathway in the human gut microbiome that converts A to universal O type blood.</title>
        <authorList>
            <person name="Rahfeld P."/>
            <person name="Sim L."/>
            <person name="Moon H."/>
            <person name="Constantinescu I."/>
            <person name="Morgan-Lang C."/>
            <person name="Hallam S.J."/>
            <person name="Kizhakkedathu J.N."/>
            <person name="Withers S.G."/>
        </authorList>
    </citation>
    <scope>NUCLEOTIDE SEQUENCE [GENOMIC DNA]</scope>
    <scope>FUNCTION</scope>
    <scope>CATALYTIC ACTIVITY</scope>
    <scope>ACTIVE SITE</scope>
    <scope>BIOPHYSICOCHEMICAL PROPERTIES</scope>
    <scope>DOMAIN</scope>
    <scope>BIOTECHNOLOGY</scope>
    <scope>MUTAGENESIS OF ASP-463</scope>
</reference>
<dbReference type="EC" id="3.2.1.-" evidence="2"/>
<dbReference type="RefSeq" id="WP_044942952.1">
    <property type="nucleotide sequence ID" value="NZ_JBDPDO010000029.1"/>
</dbReference>
<dbReference type="PDB" id="8X1B">
    <property type="method" value="EM"/>
    <property type="resolution" value="2.59 A"/>
    <property type="chains" value="A=44-701"/>
</dbReference>
<dbReference type="PDB" id="9AWT">
    <property type="method" value="X-ray"/>
    <property type="resolution" value="2.30 A"/>
    <property type="chains" value="A/B/C/D/E=27-698"/>
</dbReference>
<dbReference type="PDB" id="9AY8">
    <property type="method" value="X-ray"/>
    <property type="resolution" value="2.00 A"/>
    <property type="chains" value="A/B/C/D/E=27-698"/>
</dbReference>
<dbReference type="PDB" id="9AYU">
    <property type="method" value="X-ray"/>
    <property type="resolution" value="2.00 A"/>
    <property type="chains" value="A/B/C/D/E=27-698"/>
</dbReference>
<dbReference type="PDBsum" id="8X1B"/>
<dbReference type="PDBsum" id="9AWT"/>
<dbReference type="PDBsum" id="9AY8"/>
<dbReference type="PDBsum" id="9AYU"/>
<dbReference type="SMR" id="P0DTR5"/>
<dbReference type="GO" id="GO:0004557">
    <property type="term" value="F:alpha-galactosidase activity"/>
    <property type="evidence" value="ECO:0007669"/>
    <property type="project" value="UniProtKB-ARBA"/>
</dbReference>
<dbReference type="Gene3D" id="3.20.20.70">
    <property type="entry name" value="Aldolase class I"/>
    <property type="match status" value="1"/>
</dbReference>
<dbReference type="Gene3D" id="2.60.120.260">
    <property type="entry name" value="Galactose-binding domain-like"/>
    <property type="match status" value="3"/>
</dbReference>
<dbReference type="InterPro" id="IPR013785">
    <property type="entry name" value="Aldolase_TIM"/>
</dbReference>
<dbReference type="InterPro" id="IPR050985">
    <property type="entry name" value="Alpha-glycosidase_related"/>
</dbReference>
<dbReference type="InterPro" id="IPR017853">
    <property type="entry name" value="Glycoside_hydrolase_SF"/>
</dbReference>
<dbReference type="PANTHER" id="PTHR43053:SF3">
    <property type="entry name" value="ALPHA-GALACTOSIDASE C-RELATED"/>
    <property type="match status" value="1"/>
</dbReference>
<dbReference type="PANTHER" id="PTHR43053">
    <property type="entry name" value="GLYCOSIDASE FAMILY 31"/>
    <property type="match status" value="1"/>
</dbReference>
<dbReference type="Pfam" id="PF02065">
    <property type="entry name" value="Melibiase"/>
    <property type="match status" value="1"/>
</dbReference>
<dbReference type="SUPFAM" id="SSF51445">
    <property type="entry name" value="(Trans)glycosidases"/>
    <property type="match status" value="1"/>
</dbReference>
<organism>
    <name type="scientific">Flavonifractor plautii</name>
    <name type="common">Fusobacterium plautii</name>
    <dbReference type="NCBI Taxonomy" id="292800"/>
    <lineage>
        <taxon>Bacteria</taxon>
        <taxon>Bacillati</taxon>
        <taxon>Bacillota</taxon>
        <taxon>Clostridia</taxon>
        <taxon>Eubacteriales</taxon>
        <taxon>Oscillospiraceae</taxon>
        <taxon>Flavonifractor</taxon>
    </lineage>
</organism>